<gene>
    <name evidence="1" type="primary">pepT</name>
    <name type="ordered locus">EFER_1291</name>
</gene>
<comment type="function">
    <text evidence="1">Cleaves the N-terminal amino acid of tripeptides.</text>
</comment>
<comment type="catalytic activity">
    <reaction evidence="1">
        <text>Release of the N-terminal residue from a tripeptide.</text>
        <dbReference type="EC" id="3.4.11.4"/>
    </reaction>
</comment>
<comment type="cofactor">
    <cofactor evidence="1">
        <name>Zn(2+)</name>
        <dbReference type="ChEBI" id="CHEBI:29105"/>
    </cofactor>
    <text evidence="1">Binds 2 Zn(2+) ions per subunit.</text>
</comment>
<comment type="subcellular location">
    <subcellularLocation>
        <location evidence="1">Cytoplasm</location>
    </subcellularLocation>
</comment>
<comment type="similarity">
    <text evidence="1">Belongs to the peptidase M20B family.</text>
</comment>
<keyword id="KW-0031">Aminopeptidase</keyword>
<keyword id="KW-0963">Cytoplasm</keyword>
<keyword id="KW-0378">Hydrolase</keyword>
<keyword id="KW-0479">Metal-binding</keyword>
<keyword id="KW-0482">Metalloprotease</keyword>
<keyword id="KW-0645">Protease</keyword>
<keyword id="KW-0862">Zinc</keyword>
<organism>
    <name type="scientific">Escherichia fergusonii (strain ATCC 35469 / DSM 13698 / CCUG 18766 / IAM 14443 / JCM 21226 / LMG 7866 / NBRC 102419 / NCTC 12128 / CDC 0568-73)</name>
    <dbReference type="NCBI Taxonomy" id="585054"/>
    <lineage>
        <taxon>Bacteria</taxon>
        <taxon>Pseudomonadati</taxon>
        <taxon>Pseudomonadota</taxon>
        <taxon>Gammaproteobacteria</taxon>
        <taxon>Enterobacterales</taxon>
        <taxon>Enterobacteriaceae</taxon>
        <taxon>Escherichia</taxon>
    </lineage>
</organism>
<protein>
    <recommendedName>
        <fullName evidence="1">Peptidase T</fullName>
        <ecNumber evidence="1">3.4.11.4</ecNumber>
    </recommendedName>
    <alternativeName>
        <fullName evidence="1">Aminotripeptidase</fullName>
        <shortName evidence="1">Tripeptidase</shortName>
    </alternativeName>
    <alternativeName>
        <fullName evidence="1">Tripeptide aminopeptidase</fullName>
    </alternativeName>
</protein>
<reference key="1">
    <citation type="journal article" date="2009" name="PLoS Genet.">
        <title>Organised genome dynamics in the Escherichia coli species results in highly diverse adaptive paths.</title>
        <authorList>
            <person name="Touchon M."/>
            <person name="Hoede C."/>
            <person name="Tenaillon O."/>
            <person name="Barbe V."/>
            <person name="Baeriswyl S."/>
            <person name="Bidet P."/>
            <person name="Bingen E."/>
            <person name="Bonacorsi S."/>
            <person name="Bouchier C."/>
            <person name="Bouvet O."/>
            <person name="Calteau A."/>
            <person name="Chiapello H."/>
            <person name="Clermont O."/>
            <person name="Cruveiller S."/>
            <person name="Danchin A."/>
            <person name="Diard M."/>
            <person name="Dossat C."/>
            <person name="Karoui M.E."/>
            <person name="Frapy E."/>
            <person name="Garry L."/>
            <person name="Ghigo J.M."/>
            <person name="Gilles A.M."/>
            <person name="Johnson J."/>
            <person name="Le Bouguenec C."/>
            <person name="Lescat M."/>
            <person name="Mangenot S."/>
            <person name="Martinez-Jehanne V."/>
            <person name="Matic I."/>
            <person name="Nassif X."/>
            <person name="Oztas S."/>
            <person name="Petit M.A."/>
            <person name="Pichon C."/>
            <person name="Rouy Z."/>
            <person name="Ruf C.S."/>
            <person name="Schneider D."/>
            <person name="Tourret J."/>
            <person name="Vacherie B."/>
            <person name="Vallenet D."/>
            <person name="Medigue C."/>
            <person name="Rocha E.P.C."/>
            <person name="Denamur E."/>
        </authorList>
    </citation>
    <scope>NUCLEOTIDE SEQUENCE [LARGE SCALE GENOMIC DNA]</scope>
    <source>
        <strain>ATCC 35469 / DSM 13698 / BCRC 15582 / CCUG 18766 / IAM 14443 / JCM 21226 / LMG 7866 / NBRC 102419 / NCTC 12128 / CDC 0568-73</strain>
    </source>
</reference>
<dbReference type="EC" id="3.4.11.4" evidence="1"/>
<dbReference type="EMBL" id="CU928158">
    <property type="protein sequence ID" value="CAQ88815.1"/>
    <property type="molecule type" value="Genomic_DNA"/>
</dbReference>
<dbReference type="RefSeq" id="WP_000359456.1">
    <property type="nucleotide sequence ID" value="NC_011740.1"/>
</dbReference>
<dbReference type="SMR" id="B7LQ18"/>
<dbReference type="MEROPS" id="M20.003"/>
<dbReference type="GeneID" id="75057664"/>
<dbReference type="KEGG" id="efe:EFER_1291"/>
<dbReference type="HOGENOM" id="CLU_053676_0_0_6"/>
<dbReference type="OrthoDB" id="9804934at2"/>
<dbReference type="Proteomes" id="UP000000745">
    <property type="component" value="Chromosome"/>
</dbReference>
<dbReference type="GO" id="GO:0005829">
    <property type="term" value="C:cytosol"/>
    <property type="evidence" value="ECO:0007669"/>
    <property type="project" value="TreeGrafter"/>
</dbReference>
<dbReference type="GO" id="GO:0008237">
    <property type="term" value="F:metallopeptidase activity"/>
    <property type="evidence" value="ECO:0007669"/>
    <property type="project" value="UniProtKB-KW"/>
</dbReference>
<dbReference type="GO" id="GO:0045148">
    <property type="term" value="F:tripeptide aminopeptidase activity"/>
    <property type="evidence" value="ECO:0007669"/>
    <property type="project" value="UniProtKB-UniRule"/>
</dbReference>
<dbReference type="GO" id="GO:0008270">
    <property type="term" value="F:zinc ion binding"/>
    <property type="evidence" value="ECO:0007669"/>
    <property type="project" value="UniProtKB-UniRule"/>
</dbReference>
<dbReference type="GO" id="GO:0043171">
    <property type="term" value="P:peptide catabolic process"/>
    <property type="evidence" value="ECO:0007669"/>
    <property type="project" value="UniProtKB-UniRule"/>
</dbReference>
<dbReference type="GO" id="GO:0006508">
    <property type="term" value="P:proteolysis"/>
    <property type="evidence" value="ECO:0007669"/>
    <property type="project" value="UniProtKB-UniRule"/>
</dbReference>
<dbReference type="CDD" id="cd03892">
    <property type="entry name" value="M20_peptT"/>
    <property type="match status" value="1"/>
</dbReference>
<dbReference type="FunFam" id="3.30.70.360:FF:000002">
    <property type="entry name" value="Peptidase T"/>
    <property type="match status" value="1"/>
</dbReference>
<dbReference type="Gene3D" id="3.30.70.360">
    <property type="match status" value="1"/>
</dbReference>
<dbReference type="Gene3D" id="3.40.630.10">
    <property type="entry name" value="Zn peptidases"/>
    <property type="match status" value="1"/>
</dbReference>
<dbReference type="HAMAP" id="MF_00550">
    <property type="entry name" value="Aminopeptidase_M20"/>
    <property type="match status" value="1"/>
</dbReference>
<dbReference type="InterPro" id="IPR001261">
    <property type="entry name" value="ArgE/DapE_CS"/>
</dbReference>
<dbReference type="InterPro" id="IPR036264">
    <property type="entry name" value="Bact_exopeptidase_dim_dom"/>
</dbReference>
<dbReference type="InterPro" id="IPR002933">
    <property type="entry name" value="Peptidase_M20"/>
</dbReference>
<dbReference type="InterPro" id="IPR011650">
    <property type="entry name" value="Peptidase_M20_dimer"/>
</dbReference>
<dbReference type="InterPro" id="IPR010161">
    <property type="entry name" value="Peptidase_M20B"/>
</dbReference>
<dbReference type="NCBIfam" id="TIGR01882">
    <property type="entry name" value="peptidase-T"/>
    <property type="match status" value="1"/>
</dbReference>
<dbReference type="NCBIfam" id="NF003976">
    <property type="entry name" value="PRK05469.1"/>
    <property type="match status" value="1"/>
</dbReference>
<dbReference type="NCBIfam" id="NF009920">
    <property type="entry name" value="PRK13381.1"/>
    <property type="match status" value="1"/>
</dbReference>
<dbReference type="PANTHER" id="PTHR42994">
    <property type="entry name" value="PEPTIDASE T"/>
    <property type="match status" value="1"/>
</dbReference>
<dbReference type="PANTHER" id="PTHR42994:SF1">
    <property type="entry name" value="PEPTIDASE T"/>
    <property type="match status" value="1"/>
</dbReference>
<dbReference type="Pfam" id="PF07687">
    <property type="entry name" value="M20_dimer"/>
    <property type="match status" value="1"/>
</dbReference>
<dbReference type="Pfam" id="PF01546">
    <property type="entry name" value="Peptidase_M20"/>
    <property type="match status" value="1"/>
</dbReference>
<dbReference type="PIRSF" id="PIRSF037215">
    <property type="entry name" value="Peptidase_M20B"/>
    <property type="match status" value="1"/>
</dbReference>
<dbReference type="SUPFAM" id="SSF55031">
    <property type="entry name" value="Bacterial exopeptidase dimerisation domain"/>
    <property type="match status" value="1"/>
</dbReference>
<dbReference type="SUPFAM" id="SSF53187">
    <property type="entry name" value="Zn-dependent exopeptidases"/>
    <property type="match status" value="1"/>
</dbReference>
<dbReference type="PROSITE" id="PS00758">
    <property type="entry name" value="ARGE_DAPE_CPG2_1"/>
    <property type="match status" value="1"/>
</dbReference>
<dbReference type="PROSITE" id="PS00759">
    <property type="entry name" value="ARGE_DAPE_CPG2_2"/>
    <property type="match status" value="1"/>
</dbReference>
<evidence type="ECO:0000255" key="1">
    <source>
        <dbReference type="HAMAP-Rule" id="MF_00550"/>
    </source>
</evidence>
<feature type="chain" id="PRO_1000129032" description="Peptidase T">
    <location>
        <begin position="1"/>
        <end position="408"/>
    </location>
</feature>
<feature type="active site" evidence="1">
    <location>
        <position position="80"/>
    </location>
</feature>
<feature type="active site" description="Proton acceptor" evidence="1">
    <location>
        <position position="173"/>
    </location>
</feature>
<feature type="binding site" evidence="1">
    <location>
        <position position="78"/>
    </location>
    <ligand>
        <name>Zn(2+)</name>
        <dbReference type="ChEBI" id="CHEBI:29105"/>
        <label>1</label>
    </ligand>
</feature>
<feature type="binding site" evidence="1">
    <location>
        <position position="140"/>
    </location>
    <ligand>
        <name>Zn(2+)</name>
        <dbReference type="ChEBI" id="CHEBI:29105"/>
        <label>1</label>
    </ligand>
</feature>
<feature type="binding site" evidence="1">
    <location>
        <position position="140"/>
    </location>
    <ligand>
        <name>Zn(2+)</name>
        <dbReference type="ChEBI" id="CHEBI:29105"/>
        <label>2</label>
    </ligand>
</feature>
<feature type="binding site" evidence="1">
    <location>
        <position position="174"/>
    </location>
    <ligand>
        <name>Zn(2+)</name>
        <dbReference type="ChEBI" id="CHEBI:29105"/>
        <label>2</label>
    </ligand>
</feature>
<feature type="binding site" evidence="1">
    <location>
        <position position="196"/>
    </location>
    <ligand>
        <name>Zn(2+)</name>
        <dbReference type="ChEBI" id="CHEBI:29105"/>
        <label>1</label>
    </ligand>
</feature>
<feature type="binding site" evidence="1">
    <location>
        <position position="379"/>
    </location>
    <ligand>
        <name>Zn(2+)</name>
        <dbReference type="ChEBI" id="CHEBI:29105"/>
        <label>2</label>
    </ligand>
</feature>
<name>PEPT_ESCF3</name>
<accession>B7LQ18</accession>
<proteinExistence type="inferred from homology"/>
<sequence>MDKLLERFLNYVSLDTQSKAGVRQVPSTEGQWKLLHLLKEQLEEMGLINVTLSEKGTLMATLPANVPGDIPAIGFISHVDTSPDCSGKNVNPQIVENYRGGDIALGVGDEVLSPVMFPVLHQLLGQTLITTDGKTLLGADDKAGIAEIMTALAVLQQKNIPHGDIRVAFTPDEEVGKGAKHFDVDAFDARWAYTVDGGGVGELEFENFNAASVNIKIVGNNVHPGTAKGVMVNALSLAARIHAEVPADESPEMTEGYEGFYHLASMKGTVERADMHYIIRDFDRKQFEARKRKMMEIAKKVGKGLHPDCYIELVIEDSYYNMREKVAEHPHILDIAQQAMRDCGIEPQLKPIRGGTDGAQLSFMGLPCPNLFTGGYNYHGKHEFVTLEGMEKAVRVIVRIAELTAKQN</sequence>